<proteinExistence type="inferred from homology"/>
<sequence>MFPMVTEFMNYGQQTVRAARYIGQGFMITLSHANRLPVTIQYPYEKLITSERFRGRIHFEFDKCIACEVCVRVCPIDLPVVDWKLETDIRKKRLLNYSIDFGICIFCGNCVEYCPTNCLSMTEEYELSTYDRHELNYNQIALGRLPMSIIDDYTIRTILNLPEIKI</sequence>
<protein>
    <recommendedName>
        <fullName evidence="1">NAD(P)H-quinone oxidoreductase subunit I, chloroplastic</fullName>
        <ecNumber evidence="1">7.1.1.-</ecNumber>
    </recommendedName>
    <alternativeName>
        <fullName evidence="1">NAD(P)H dehydrogenase subunit I</fullName>
        <shortName evidence="1">NDH subunit I</shortName>
    </alternativeName>
    <alternativeName>
        <fullName evidence="1">NADH-plastoquinone oxidoreductase subunit I</fullName>
    </alternativeName>
</protein>
<dbReference type="EC" id="7.1.1.-" evidence="1"/>
<dbReference type="EMBL" id="AF383787">
    <property type="protein sequence ID" value="AAN61728.1"/>
    <property type="molecule type" value="Genomic_DNA"/>
</dbReference>
<dbReference type="SMR" id="Q8HVS6"/>
<dbReference type="GO" id="GO:0009535">
    <property type="term" value="C:chloroplast thylakoid membrane"/>
    <property type="evidence" value="ECO:0007669"/>
    <property type="project" value="UniProtKB-SubCell"/>
</dbReference>
<dbReference type="GO" id="GO:0051539">
    <property type="term" value="F:4 iron, 4 sulfur cluster binding"/>
    <property type="evidence" value="ECO:0007669"/>
    <property type="project" value="UniProtKB-KW"/>
</dbReference>
<dbReference type="GO" id="GO:0005506">
    <property type="term" value="F:iron ion binding"/>
    <property type="evidence" value="ECO:0007669"/>
    <property type="project" value="UniProtKB-UniRule"/>
</dbReference>
<dbReference type="GO" id="GO:0008137">
    <property type="term" value="F:NADH dehydrogenase (ubiquinone) activity"/>
    <property type="evidence" value="ECO:0007669"/>
    <property type="project" value="InterPro"/>
</dbReference>
<dbReference type="GO" id="GO:0048038">
    <property type="term" value="F:quinone binding"/>
    <property type="evidence" value="ECO:0007669"/>
    <property type="project" value="UniProtKB-KW"/>
</dbReference>
<dbReference type="GO" id="GO:0019684">
    <property type="term" value="P:photosynthesis, light reaction"/>
    <property type="evidence" value="ECO:0007669"/>
    <property type="project" value="UniProtKB-UniRule"/>
</dbReference>
<dbReference type="FunFam" id="3.30.70.3270:FF:000006">
    <property type="entry name" value="NAD(P)H-quinone oxidoreductase subunit I, chloroplastic"/>
    <property type="match status" value="1"/>
</dbReference>
<dbReference type="Gene3D" id="3.30.70.3270">
    <property type="match status" value="1"/>
</dbReference>
<dbReference type="HAMAP" id="MF_01351">
    <property type="entry name" value="NDH1_NuoI"/>
    <property type="match status" value="1"/>
</dbReference>
<dbReference type="InterPro" id="IPR017896">
    <property type="entry name" value="4Fe4S_Fe-S-bd"/>
</dbReference>
<dbReference type="InterPro" id="IPR017900">
    <property type="entry name" value="4Fe4S_Fe_S_CS"/>
</dbReference>
<dbReference type="InterPro" id="IPR010226">
    <property type="entry name" value="NADH_quinone_OxRdtase_chainI"/>
</dbReference>
<dbReference type="InterPro" id="IPR004497">
    <property type="entry name" value="NDHI"/>
</dbReference>
<dbReference type="NCBIfam" id="TIGR00403">
    <property type="entry name" value="ndhI"/>
    <property type="match status" value="1"/>
</dbReference>
<dbReference type="NCBIfam" id="TIGR01971">
    <property type="entry name" value="NuoI"/>
    <property type="match status" value="1"/>
</dbReference>
<dbReference type="NCBIfam" id="NF004537">
    <property type="entry name" value="PRK05888.1-3"/>
    <property type="match status" value="1"/>
</dbReference>
<dbReference type="PANTHER" id="PTHR47275">
    <property type="entry name" value="NAD(P)H-QUINONE OXIDOREDUCTASE SUBUNIT I, CHLOROPLASTIC"/>
    <property type="match status" value="1"/>
</dbReference>
<dbReference type="PANTHER" id="PTHR47275:SF1">
    <property type="entry name" value="NAD(P)H-QUINONE OXIDOREDUCTASE SUBUNIT I, CHLOROPLASTIC"/>
    <property type="match status" value="1"/>
</dbReference>
<dbReference type="Pfam" id="PF00037">
    <property type="entry name" value="Fer4"/>
    <property type="match status" value="2"/>
</dbReference>
<dbReference type="SUPFAM" id="SSF54862">
    <property type="entry name" value="4Fe-4S ferredoxins"/>
    <property type="match status" value="1"/>
</dbReference>
<dbReference type="PROSITE" id="PS00198">
    <property type="entry name" value="4FE4S_FER_1"/>
    <property type="match status" value="2"/>
</dbReference>
<dbReference type="PROSITE" id="PS51379">
    <property type="entry name" value="4FE4S_FER_2"/>
    <property type="match status" value="2"/>
</dbReference>
<feature type="chain" id="PRO_0000250769" description="NAD(P)H-quinone oxidoreductase subunit I, chloroplastic">
    <location>
        <begin position="1"/>
        <end position="166"/>
    </location>
</feature>
<feature type="domain" description="4Fe-4S ferredoxin-type 1" evidence="1">
    <location>
        <begin position="55"/>
        <end position="84"/>
    </location>
</feature>
<feature type="domain" description="4Fe-4S ferredoxin-type 2" evidence="1">
    <location>
        <begin position="95"/>
        <end position="124"/>
    </location>
</feature>
<feature type="binding site" evidence="1">
    <location>
        <position position="64"/>
    </location>
    <ligand>
        <name>[4Fe-4S] cluster</name>
        <dbReference type="ChEBI" id="CHEBI:49883"/>
        <label>1</label>
    </ligand>
</feature>
<feature type="binding site" evidence="1">
    <location>
        <position position="67"/>
    </location>
    <ligand>
        <name>[4Fe-4S] cluster</name>
        <dbReference type="ChEBI" id="CHEBI:49883"/>
        <label>1</label>
    </ligand>
</feature>
<feature type="binding site" evidence="1">
    <location>
        <position position="70"/>
    </location>
    <ligand>
        <name>[4Fe-4S] cluster</name>
        <dbReference type="ChEBI" id="CHEBI:49883"/>
        <label>1</label>
    </ligand>
</feature>
<feature type="binding site" evidence="1">
    <location>
        <position position="74"/>
    </location>
    <ligand>
        <name>[4Fe-4S] cluster</name>
        <dbReference type="ChEBI" id="CHEBI:49883"/>
        <label>2</label>
    </ligand>
</feature>
<feature type="binding site" evidence="1">
    <location>
        <position position="104"/>
    </location>
    <ligand>
        <name>[4Fe-4S] cluster</name>
        <dbReference type="ChEBI" id="CHEBI:49883"/>
        <label>2</label>
    </ligand>
</feature>
<feature type="binding site" evidence="1">
    <location>
        <position position="107"/>
    </location>
    <ligand>
        <name>[4Fe-4S] cluster</name>
        <dbReference type="ChEBI" id="CHEBI:49883"/>
        <label>2</label>
    </ligand>
</feature>
<feature type="binding site" evidence="1">
    <location>
        <position position="110"/>
    </location>
    <ligand>
        <name>[4Fe-4S] cluster</name>
        <dbReference type="ChEBI" id="CHEBI:49883"/>
        <label>2</label>
    </ligand>
</feature>
<feature type="binding site" evidence="1">
    <location>
        <position position="114"/>
    </location>
    <ligand>
        <name>[4Fe-4S] cluster</name>
        <dbReference type="ChEBI" id="CHEBI:49883"/>
        <label>1</label>
    </ligand>
</feature>
<geneLocation type="chloroplast"/>
<comment type="function">
    <text evidence="1">NDH shuttles electrons from NAD(P)H:plastoquinone, via FMN and iron-sulfur (Fe-S) centers, to quinones in the photosynthetic chain and possibly in a chloroplast respiratory chain. The immediate electron acceptor for the enzyme in this species is believed to be plastoquinone. Couples the redox reaction to proton translocation, and thus conserves the redox energy in a proton gradient.</text>
</comment>
<comment type="catalytic activity">
    <reaction evidence="1">
        <text>a plastoquinone + NADH + (n+1) H(+)(in) = a plastoquinol + NAD(+) + n H(+)(out)</text>
        <dbReference type="Rhea" id="RHEA:42608"/>
        <dbReference type="Rhea" id="RHEA-COMP:9561"/>
        <dbReference type="Rhea" id="RHEA-COMP:9562"/>
        <dbReference type="ChEBI" id="CHEBI:15378"/>
        <dbReference type="ChEBI" id="CHEBI:17757"/>
        <dbReference type="ChEBI" id="CHEBI:57540"/>
        <dbReference type="ChEBI" id="CHEBI:57945"/>
        <dbReference type="ChEBI" id="CHEBI:62192"/>
    </reaction>
</comment>
<comment type="catalytic activity">
    <reaction evidence="1">
        <text>a plastoquinone + NADPH + (n+1) H(+)(in) = a plastoquinol + NADP(+) + n H(+)(out)</text>
        <dbReference type="Rhea" id="RHEA:42612"/>
        <dbReference type="Rhea" id="RHEA-COMP:9561"/>
        <dbReference type="Rhea" id="RHEA-COMP:9562"/>
        <dbReference type="ChEBI" id="CHEBI:15378"/>
        <dbReference type="ChEBI" id="CHEBI:17757"/>
        <dbReference type="ChEBI" id="CHEBI:57783"/>
        <dbReference type="ChEBI" id="CHEBI:58349"/>
        <dbReference type="ChEBI" id="CHEBI:62192"/>
    </reaction>
</comment>
<comment type="cofactor">
    <cofactor evidence="1">
        <name>[4Fe-4S] cluster</name>
        <dbReference type="ChEBI" id="CHEBI:49883"/>
    </cofactor>
    <text evidence="1">Binds 2 [4Fe-4S] clusters per subunit.</text>
</comment>
<comment type="subunit">
    <text evidence="1">NDH is composed of at least 16 different subunits, 5 of which are encoded in the nucleus.</text>
</comment>
<comment type="subcellular location">
    <subcellularLocation>
        <location evidence="1">Plastid</location>
        <location evidence="1">Chloroplast thylakoid membrane</location>
        <topology evidence="1">Peripheral membrane protein</topology>
    </subcellularLocation>
</comment>
<comment type="similarity">
    <text evidence="1">Belongs to the complex I 23 kDa subunit family.</text>
</comment>
<evidence type="ECO:0000255" key="1">
    <source>
        <dbReference type="HAMAP-Rule" id="MF_01351"/>
    </source>
</evidence>
<organism>
    <name type="scientific">Espeletia timotensis</name>
    <name type="common">Andean giant rosette</name>
    <name type="synonym">Coespeletia timotensis</name>
    <dbReference type="NCBI Taxonomy" id="183013"/>
    <lineage>
        <taxon>Eukaryota</taxon>
        <taxon>Viridiplantae</taxon>
        <taxon>Streptophyta</taxon>
        <taxon>Embryophyta</taxon>
        <taxon>Tracheophyta</taxon>
        <taxon>Spermatophyta</taxon>
        <taxon>Magnoliopsida</taxon>
        <taxon>eudicotyledons</taxon>
        <taxon>Gunneridae</taxon>
        <taxon>Pentapetalae</taxon>
        <taxon>asterids</taxon>
        <taxon>campanulids</taxon>
        <taxon>Asterales</taxon>
        <taxon>Asteraceae</taxon>
        <taxon>Asteroideae</taxon>
        <taxon>Heliantheae alliance</taxon>
        <taxon>Millerieae</taxon>
        <taxon>Espeletia</taxon>
    </lineage>
</organism>
<gene>
    <name evidence="1" type="primary">ndhI</name>
</gene>
<accession>Q8HVS6</accession>
<name>NDHI_ESPTI</name>
<keyword id="KW-0004">4Fe-4S</keyword>
<keyword id="KW-0150">Chloroplast</keyword>
<keyword id="KW-0408">Iron</keyword>
<keyword id="KW-0411">Iron-sulfur</keyword>
<keyword id="KW-0472">Membrane</keyword>
<keyword id="KW-0479">Metal-binding</keyword>
<keyword id="KW-0520">NAD</keyword>
<keyword id="KW-0521">NADP</keyword>
<keyword id="KW-0934">Plastid</keyword>
<keyword id="KW-0618">Plastoquinone</keyword>
<keyword id="KW-0874">Quinone</keyword>
<keyword id="KW-0677">Repeat</keyword>
<keyword id="KW-0793">Thylakoid</keyword>
<keyword id="KW-1278">Translocase</keyword>
<reference key="1">
    <citation type="submission" date="2003-01" db="EMBL/GenBank/DDBJ databases">
        <title>Chloroplast DNA phylogeny of tribe Heliantheae (Asteraceae).</title>
        <authorList>
            <person name="Panero J.L."/>
            <person name="Baldwin B.G."/>
            <person name="Schilling E.E."/>
            <person name="Clevinger J.A."/>
        </authorList>
    </citation>
    <scope>NUCLEOTIDE SEQUENCE [GENOMIC DNA]</scope>
</reference>